<keyword id="KW-0963">Cytoplasm</keyword>
<keyword id="KW-0489">Methyltransferase</keyword>
<keyword id="KW-1185">Reference proteome</keyword>
<keyword id="KW-0698">rRNA processing</keyword>
<keyword id="KW-0949">S-adenosyl-L-methionine</keyword>
<keyword id="KW-0808">Transferase</keyword>
<comment type="function">
    <text evidence="1">Specifically methylates the N7 position of a guanine in 16S rRNA.</text>
</comment>
<comment type="subcellular location">
    <subcellularLocation>
        <location evidence="1">Cytoplasm</location>
    </subcellularLocation>
</comment>
<comment type="similarity">
    <text evidence="1">Belongs to the methyltransferase superfamily. RNA methyltransferase RsmG family.</text>
</comment>
<gene>
    <name evidence="1" type="primary">rsmG</name>
    <name type="ordered locus">MMOB5670</name>
</gene>
<dbReference type="EC" id="2.1.1.-" evidence="1"/>
<dbReference type="EMBL" id="AE017308">
    <property type="protein sequence ID" value="AAT28053.1"/>
    <property type="molecule type" value="Genomic_DNA"/>
</dbReference>
<dbReference type="SMR" id="Q6KH77"/>
<dbReference type="STRING" id="267748.MMOB5670"/>
<dbReference type="KEGG" id="mmo:MMOB5670"/>
<dbReference type="eggNOG" id="COG0357">
    <property type="taxonomic scope" value="Bacteria"/>
</dbReference>
<dbReference type="HOGENOM" id="CLU_065341_2_1_14"/>
<dbReference type="OrthoDB" id="9808773at2"/>
<dbReference type="Proteomes" id="UP000009072">
    <property type="component" value="Chromosome"/>
</dbReference>
<dbReference type="GO" id="GO:0005829">
    <property type="term" value="C:cytosol"/>
    <property type="evidence" value="ECO:0007669"/>
    <property type="project" value="TreeGrafter"/>
</dbReference>
<dbReference type="GO" id="GO:0070043">
    <property type="term" value="F:rRNA (guanine-N7-)-methyltransferase activity"/>
    <property type="evidence" value="ECO:0007669"/>
    <property type="project" value="UniProtKB-UniRule"/>
</dbReference>
<dbReference type="CDD" id="cd02440">
    <property type="entry name" value="AdoMet_MTases"/>
    <property type="match status" value="1"/>
</dbReference>
<dbReference type="Gene3D" id="3.40.50.150">
    <property type="entry name" value="Vaccinia Virus protein VP39"/>
    <property type="match status" value="1"/>
</dbReference>
<dbReference type="HAMAP" id="MF_00074">
    <property type="entry name" value="16SrRNA_methyltr_G"/>
    <property type="match status" value="1"/>
</dbReference>
<dbReference type="InterPro" id="IPR003682">
    <property type="entry name" value="rRNA_ssu_MeTfrase_G"/>
</dbReference>
<dbReference type="InterPro" id="IPR029063">
    <property type="entry name" value="SAM-dependent_MTases_sf"/>
</dbReference>
<dbReference type="NCBIfam" id="TIGR00138">
    <property type="entry name" value="rsmG_gidB"/>
    <property type="match status" value="1"/>
</dbReference>
<dbReference type="PANTHER" id="PTHR31760">
    <property type="entry name" value="S-ADENOSYL-L-METHIONINE-DEPENDENT METHYLTRANSFERASES SUPERFAMILY PROTEIN"/>
    <property type="match status" value="1"/>
</dbReference>
<dbReference type="PANTHER" id="PTHR31760:SF0">
    <property type="entry name" value="S-ADENOSYL-L-METHIONINE-DEPENDENT METHYLTRANSFERASES SUPERFAMILY PROTEIN"/>
    <property type="match status" value="1"/>
</dbReference>
<dbReference type="Pfam" id="PF02527">
    <property type="entry name" value="GidB"/>
    <property type="match status" value="1"/>
</dbReference>
<dbReference type="PIRSF" id="PIRSF003078">
    <property type="entry name" value="GidB"/>
    <property type="match status" value="1"/>
</dbReference>
<dbReference type="SUPFAM" id="SSF53335">
    <property type="entry name" value="S-adenosyl-L-methionine-dependent methyltransferases"/>
    <property type="match status" value="1"/>
</dbReference>
<sequence length="225" mass="26487">MSPFQNFMILEEKQLLILMKTNSEICKELVSNPEKFNKLEQFVSLVEEWNKKINLTGFEGENLWKEGINESFFCFEKILETKNLNDFENKSWVDIGSGAGFPIIPFAIIYPKINFYIIESNSKRVRFLELVNEKLNLKIKIFNTRAENFSELKFDFVSARAVAHLDLLIKYFMKITKQDATGYFIKGPKIFEEKEEINNKKISIETLKIDKIKEKNVFVVKMNRI</sequence>
<organism>
    <name type="scientific">Mycoplasma mobile (strain ATCC 43663 / 163K / NCTC 11711)</name>
    <name type="common">Mesomycoplasma mobile</name>
    <dbReference type="NCBI Taxonomy" id="267748"/>
    <lineage>
        <taxon>Bacteria</taxon>
        <taxon>Bacillati</taxon>
        <taxon>Mycoplasmatota</taxon>
        <taxon>Mycoplasmoidales</taxon>
        <taxon>Metamycoplasmataceae</taxon>
        <taxon>Mesomycoplasma</taxon>
    </lineage>
</organism>
<reference key="1">
    <citation type="journal article" date="2004" name="Genome Res.">
        <title>The complete genome and proteome of Mycoplasma mobile.</title>
        <authorList>
            <person name="Jaffe J.D."/>
            <person name="Stange-Thomann N."/>
            <person name="Smith C."/>
            <person name="DeCaprio D."/>
            <person name="Fisher S."/>
            <person name="Butler J."/>
            <person name="Calvo S."/>
            <person name="Elkins T."/>
            <person name="FitzGerald M.G."/>
            <person name="Hafez N."/>
            <person name="Kodira C.D."/>
            <person name="Major J."/>
            <person name="Wang S."/>
            <person name="Wilkinson J."/>
            <person name="Nicol R."/>
            <person name="Nusbaum C."/>
            <person name="Birren B."/>
            <person name="Berg H.C."/>
            <person name="Church G.M."/>
        </authorList>
    </citation>
    <scope>NUCLEOTIDE SEQUENCE [LARGE SCALE GENOMIC DNA]</scope>
    <source>
        <strain>ATCC 43663 / NCTC 11711 / 163 K</strain>
    </source>
</reference>
<evidence type="ECO:0000255" key="1">
    <source>
        <dbReference type="HAMAP-Rule" id="MF_00074"/>
    </source>
</evidence>
<protein>
    <recommendedName>
        <fullName evidence="1">Ribosomal RNA small subunit methyltransferase G</fullName>
        <ecNumber evidence="1">2.1.1.-</ecNumber>
    </recommendedName>
    <alternativeName>
        <fullName evidence="1">16S rRNA 7-methylguanosine methyltransferase</fullName>
        <shortName evidence="1">16S rRNA m7G methyltransferase</shortName>
    </alternativeName>
</protein>
<accession>Q6KH77</accession>
<name>RSMG_MYCM1</name>
<proteinExistence type="inferred from homology"/>
<feature type="chain" id="PRO_0000184287" description="Ribosomal RNA small subunit methyltransferase G">
    <location>
        <begin position="1"/>
        <end position="225"/>
    </location>
</feature>
<feature type="binding site" evidence="1">
    <location>
        <position position="96"/>
    </location>
    <ligand>
        <name>S-adenosyl-L-methionine</name>
        <dbReference type="ChEBI" id="CHEBI:59789"/>
    </ligand>
</feature>
<feature type="binding site" evidence="1">
    <location>
        <position position="101"/>
    </location>
    <ligand>
        <name>S-adenosyl-L-methionine</name>
        <dbReference type="ChEBI" id="CHEBI:59789"/>
    </ligand>
</feature>
<feature type="binding site" evidence="1">
    <location>
        <begin position="146"/>
        <end position="147"/>
    </location>
    <ligand>
        <name>S-adenosyl-L-methionine</name>
        <dbReference type="ChEBI" id="CHEBI:59789"/>
    </ligand>
</feature>
<feature type="binding site" evidence="1">
    <location>
        <position position="160"/>
    </location>
    <ligand>
        <name>S-adenosyl-L-methionine</name>
        <dbReference type="ChEBI" id="CHEBI:59789"/>
    </ligand>
</feature>